<sequence length="349" mass="39077">MIEFDNLTYLHGKPQGTGLLKANPEDFVVVEDLGFEPDGEGEHILVRILKNGCNTRFVADALAKFLKIHAREVSFAGQKDKHAVTEQWLCARVPGKEMPDLSAFQLEGCQVLEYARHKRKLRLGALKGNAFTLVLREVSNRDDVEQRLIDICVKGVPNYFGAQRFGIGGSNLQGALRWAQTNTPVRDRNKRSFWLSAARSALFNQIVAERLKKADVNQVVDGDALQLAGRGSWFVATTEELAELQRRVNDKELMITAALPGSGEWGTQREALAFEQAAVAAETELQALLVREKVEAARRAMLLYPQQLSWNWWDDVTVEIRFWLPAGSFATSVVRELINTTGDYAHIAE</sequence>
<name>TRUD_SHIDS</name>
<keyword id="KW-0413">Isomerase</keyword>
<keyword id="KW-1185">Reference proteome</keyword>
<keyword id="KW-0819">tRNA processing</keyword>
<gene>
    <name evidence="1" type="primary">truD</name>
    <name type="ordered locus">SDY_2944</name>
</gene>
<evidence type="ECO:0000255" key="1">
    <source>
        <dbReference type="HAMAP-Rule" id="MF_01082"/>
    </source>
</evidence>
<organism>
    <name type="scientific">Shigella dysenteriae serotype 1 (strain Sd197)</name>
    <dbReference type="NCBI Taxonomy" id="300267"/>
    <lineage>
        <taxon>Bacteria</taxon>
        <taxon>Pseudomonadati</taxon>
        <taxon>Pseudomonadota</taxon>
        <taxon>Gammaproteobacteria</taxon>
        <taxon>Enterobacterales</taxon>
        <taxon>Enterobacteriaceae</taxon>
        <taxon>Shigella</taxon>
    </lineage>
</organism>
<feature type="chain" id="PRO_0000230152" description="tRNA pseudouridine synthase D">
    <location>
        <begin position="1"/>
        <end position="349"/>
    </location>
</feature>
<feature type="domain" description="TRUD" evidence="1">
    <location>
        <begin position="155"/>
        <end position="303"/>
    </location>
</feature>
<feature type="active site" description="Nucleophile" evidence="1">
    <location>
        <position position="80"/>
    </location>
</feature>
<feature type="binding site" evidence="1">
    <location>
        <position position="27"/>
    </location>
    <ligand>
        <name>substrate</name>
    </ligand>
</feature>
<feature type="binding site" evidence="1">
    <location>
        <position position="129"/>
    </location>
    <ligand>
        <name>substrate</name>
    </ligand>
</feature>
<feature type="binding site" evidence="1">
    <location>
        <position position="329"/>
    </location>
    <ligand>
        <name>substrate</name>
    </ligand>
</feature>
<accession>Q32CI5</accession>
<comment type="function">
    <text evidence="1">Responsible for synthesis of pseudouridine from uracil-13 in transfer RNAs.</text>
</comment>
<comment type="catalytic activity">
    <reaction evidence="1">
        <text>uridine(13) in tRNA = pseudouridine(13) in tRNA</text>
        <dbReference type="Rhea" id="RHEA:42540"/>
        <dbReference type="Rhea" id="RHEA-COMP:10105"/>
        <dbReference type="Rhea" id="RHEA-COMP:10106"/>
        <dbReference type="ChEBI" id="CHEBI:65314"/>
        <dbReference type="ChEBI" id="CHEBI:65315"/>
        <dbReference type="EC" id="5.4.99.27"/>
    </reaction>
</comment>
<comment type="similarity">
    <text evidence="1">Belongs to the pseudouridine synthase TruD family.</text>
</comment>
<proteinExistence type="inferred from homology"/>
<dbReference type="EC" id="5.4.99.27" evidence="1"/>
<dbReference type="EMBL" id="CP000034">
    <property type="protein sequence ID" value="ABB62970.1"/>
    <property type="molecule type" value="Genomic_DNA"/>
</dbReference>
<dbReference type="RefSeq" id="WP_000568924.1">
    <property type="nucleotide sequence ID" value="NC_007606.1"/>
</dbReference>
<dbReference type="RefSeq" id="YP_404461.1">
    <property type="nucleotide sequence ID" value="NC_007606.1"/>
</dbReference>
<dbReference type="SMR" id="Q32CI5"/>
<dbReference type="STRING" id="300267.SDY_2944"/>
<dbReference type="EnsemblBacteria" id="ABB62970">
    <property type="protein sequence ID" value="ABB62970"/>
    <property type="gene ID" value="SDY_2944"/>
</dbReference>
<dbReference type="GeneID" id="75172826"/>
<dbReference type="KEGG" id="sdy:SDY_2944"/>
<dbReference type="PATRIC" id="fig|300267.13.peg.3536"/>
<dbReference type="HOGENOM" id="CLU_005281_4_0_6"/>
<dbReference type="Proteomes" id="UP000002716">
    <property type="component" value="Chromosome"/>
</dbReference>
<dbReference type="GO" id="GO:0005829">
    <property type="term" value="C:cytosol"/>
    <property type="evidence" value="ECO:0007669"/>
    <property type="project" value="TreeGrafter"/>
</dbReference>
<dbReference type="GO" id="GO:0003723">
    <property type="term" value="F:RNA binding"/>
    <property type="evidence" value="ECO:0007669"/>
    <property type="project" value="InterPro"/>
</dbReference>
<dbReference type="GO" id="GO:0160150">
    <property type="term" value="F:tRNA pseudouridine(13) synthase activity"/>
    <property type="evidence" value="ECO:0007669"/>
    <property type="project" value="UniProtKB-EC"/>
</dbReference>
<dbReference type="GO" id="GO:0031119">
    <property type="term" value="P:tRNA pseudouridine synthesis"/>
    <property type="evidence" value="ECO:0007669"/>
    <property type="project" value="UniProtKB-UniRule"/>
</dbReference>
<dbReference type="CDD" id="cd02575">
    <property type="entry name" value="PseudoU_synth_EcTruD"/>
    <property type="match status" value="1"/>
</dbReference>
<dbReference type="FunFam" id="3.30.2340.10:FF:000001">
    <property type="entry name" value="tRNA pseudouridine synthase D"/>
    <property type="match status" value="1"/>
</dbReference>
<dbReference type="FunFam" id="3.30.2350.20:FF:000001">
    <property type="entry name" value="tRNA pseudouridine synthase D"/>
    <property type="match status" value="1"/>
</dbReference>
<dbReference type="Gene3D" id="3.30.2350.20">
    <property type="entry name" value="TruD, catalytic domain"/>
    <property type="match status" value="1"/>
</dbReference>
<dbReference type="Gene3D" id="3.30.2340.10">
    <property type="entry name" value="TruD, insertion domain"/>
    <property type="match status" value="1"/>
</dbReference>
<dbReference type="HAMAP" id="MF_01082">
    <property type="entry name" value="TruD"/>
    <property type="match status" value="1"/>
</dbReference>
<dbReference type="InterPro" id="IPR020103">
    <property type="entry name" value="PsdUridine_synth_cat_dom_sf"/>
</dbReference>
<dbReference type="InterPro" id="IPR001656">
    <property type="entry name" value="PsdUridine_synth_TruD"/>
</dbReference>
<dbReference type="InterPro" id="IPR020119">
    <property type="entry name" value="PsdUridine_synth_TruD_CS"/>
</dbReference>
<dbReference type="InterPro" id="IPR011760">
    <property type="entry name" value="PsdUridine_synth_TruD_insert"/>
</dbReference>
<dbReference type="InterPro" id="IPR042214">
    <property type="entry name" value="TruD_catalytic"/>
</dbReference>
<dbReference type="InterPro" id="IPR043165">
    <property type="entry name" value="TruD_insert_sf"/>
</dbReference>
<dbReference type="InterPro" id="IPR050170">
    <property type="entry name" value="TruD_pseudoU_synthase"/>
</dbReference>
<dbReference type="NCBIfam" id="NF002155">
    <property type="entry name" value="PRK00984.1-4"/>
    <property type="match status" value="1"/>
</dbReference>
<dbReference type="NCBIfam" id="TIGR00094">
    <property type="entry name" value="tRNA_TruD_broad"/>
    <property type="match status" value="1"/>
</dbReference>
<dbReference type="PANTHER" id="PTHR47811">
    <property type="entry name" value="TRNA PSEUDOURIDINE SYNTHASE D"/>
    <property type="match status" value="1"/>
</dbReference>
<dbReference type="PANTHER" id="PTHR47811:SF1">
    <property type="entry name" value="TRNA PSEUDOURIDINE SYNTHASE D"/>
    <property type="match status" value="1"/>
</dbReference>
<dbReference type="Pfam" id="PF01142">
    <property type="entry name" value="TruD"/>
    <property type="match status" value="2"/>
</dbReference>
<dbReference type="SUPFAM" id="SSF55120">
    <property type="entry name" value="Pseudouridine synthase"/>
    <property type="match status" value="1"/>
</dbReference>
<dbReference type="PROSITE" id="PS50984">
    <property type="entry name" value="TRUD"/>
    <property type="match status" value="1"/>
</dbReference>
<dbReference type="PROSITE" id="PS01268">
    <property type="entry name" value="UPF0024"/>
    <property type="match status" value="1"/>
</dbReference>
<protein>
    <recommendedName>
        <fullName evidence="1">tRNA pseudouridine synthase D</fullName>
        <ecNumber evidence="1">5.4.99.27</ecNumber>
    </recommendedName>
    <alternativeName>
        <fullName evidence="1">tRNA pseudouridine(13) synthase</fullName>
    </alternativeName>
    <alternativeName>
        <fullName evidence="1">tRNA pseudouridylate synthase D</fullName>
    </alternativeName>
    <alternativeName>
        <fullName evidence="1">tRNA-uridine isomerase D</fullName>
    </alternativeName>
</protein>
<reference key="1">
    <citation type="journal article" date="2005" name="Nucleic Acids Res.">
        <title>Genome dynamics and diversity of Shigella species, the etiologic agents of bacillary dysentery.</title>
        <authorList>
            <person name="Yang F."/>
            <person name="Yang J."/>
            <person name="Zhang X."/>
            <person name="Chen L."/>
            <person name="Jiang Y."/>
            <person name="Yan Y."/>
            <person name="Tang X."/>
            <person name="Wang J."/>
            <person name="Xiong Z."/>
            <person name="Dong J."/>
            <person name="Xue Y."/>
            <person name="Zhu Y."/>
            <person name="Xu X."/>
            <person name="Sun L."/>
            <person name="Chen S."/>
            <person name="Nie H."/>
            <person name="Peng J."/>
            <person name="Xu J."/>
            <person name="Wang Y."/>
            <person name="Yuan Z."/>
            <person name="Wen Y."/>
            <person name="Yao Z."/>
            <person name="Shen Y."/>
            <person name="Qiang B."/>
            <person name="Hou Y."/>
            <person name="Yu J."/>
            <person name="Jin Q."/>
        </authorList>
    </citation>
    <scope>NUCLEOTIDE SEQUENCE [LARGE SCALE GENOMIC DNA]</scope>
    <source>
        <strain>Sd197</strain>
    </source>
</reference>